<organism>
    <name type="scientific">Rickettsia conorii (strain ATCC VR-613 / Malish 7)</name>
    <dbReference type="NCBI Taxonomy" id="272944"/>
    <lineage>
        <taxon>Bacteria</taxon>
        <taxon>Pseudomonadati</taxon>
        <taxon>Pseudomonadota</taxon>
        <taxon>Alphaproteobacteria</taxon>
        <taxon>Rickettsiales</taxon>
        <taxon>Rickettsiaceae</taxon>
        <taxon>Rickettsieae</taxon>
        <taxon>Rickettsia</taxon>
        <taxon>spotted fever group</taxon>
    </lineage>
</organism>
<accession>Q92HH5</accession>
<evidence type="ECO:0000255" key="1">
    <source>
        <dbReference type="HAMAP-Rule" id="MF_00445"/>
    </source>
</evidence>
<reference key="1">
    <citation type="journal article" date="2001" name="Science">
        <title>Mechanisms of evolution in Rickettsia conorii and R. prowazekii.</title>
        <authorList>
            <person name="Ogata H."/>
            <person name="Audic S."/>
            <person name="Renesto-Audiffren P."/>
            <person name="Fournier P.-E."/>
            <person name="Barbe V."/>
            <person name="Samson D."/>
            <person name="Roux V."/>
            <person name="Cossart P."/>
            <person name="Weissenbach J."/>
            <person name="Claverie J.-M."/>
            <person name="Raoult D."/>
        </authorList>
    </citation>
    <scope>NUCLEOTIDE SEQUENCE [LARGE SCALE GENOMIC DNA]</scope>
    <source>
        <strain>ATCC VR-613 / Malish 7</strain>
    </source>
</reference>
<gene>
    <name evidence="1" type="primary">nuoN</name>
    <name type="ordered locus">RC0796</name>
</gene>
<feature type="chain" id="PRO_0000117697" description="NADH-quinone oxidoreductase subunit N">
    <location>
        <begin position="1"/>
        <end position="458"/>
    </location>
</feature>
<feature type="transmembrane region" description="Helical" evidence="1">
    <location>
        <begin position="2"/>
        <end position="22"/>
    </location>
</feature>
<feature type="transmembrane region" description="Helical" evidence="1">
    <location>
        <begin position="30"/>
        <end position="50"/>
    </location>
</feature>
<feature type="transmembrane region" description="Helical" evidence="1">
    <location>
        <begin position="62"/>
        <end position="82"/>
    </location>
</feature>
<feature type="transmembrane region" description="Helical" evidence="1">
    <location>
        <begin position="94"/>
        <end position="114"/>
    </location>
</feature>
<feature type="transmembrane region" description="Helical" evidence="1">
    <location>
        <begin position="118"/>
        <end position="138"/>
    </location>
</feature>
<feature type="transmembrane region" description="Helical" evidence="1">
    <location>
        <begin position="153"/>
        <end position="173"/>
    </location>
</feature>
<feature type="transmembrane region" description="Helical" evidence="1">
    <location>
        <begin position="194"/>
        <end position="214"/>
    </location>
</feature>
<feature type="transmembrane region" description="Helical" evidence="1">
    <location>
        <begin position="235"/>
        <end position="255"/>
    </location>
</feature>
<feature type="transmembrane region" description="Helical" evidence="1">
    <location>
        <begin position="261"/>
        <end position="281"/>
    </location>
</feature>
<feature type="transmembrane region" description="Helical" evidence="1">
    <location>
        <begin position="290"/>
        <end position="310"/>
    </location>
</feature>
<feature type="transmembrane region" description="Helical" evidence="1">
    <location>
        <begin position="318"/>
        <end position="338"/>
    </location>
</feature>
<feature type="transmembrane region" description="Helical" evidence="1">
    <location>
        <begin position="361"/>
        <end position="381"/>
    </location>
</feature>
<feature type="transmembrane region" description="Helical" evidence="1">
    <location>
        <begin position="397"/>
        <end position="417"/>
    </location>
</feature>
<feature type="transmembrane region" description="Helical" evidence="1">
    <location>
        <begin position="438"/>
        <end position="458"/>
    </location>
</feature>
<dbReference type="EC" id="7.1.1.-" evidence="1"/>
<dbReference type="EMBL" id="AE006914">
    <property type="protein sequence ID" value="AAL03334.1"/>
    <property type="molecule type" value="Genomic_DNA"/>
</dbReference>
<dbReference type="PIR" id="D97799">
    <property type="entry name" value="D97799"/>
</dbReference>
<dbReference type="RefSeq" id="WP_010977408.1">
    <property type="nucleotide sequence ID" value="NC_003103.1"/>
</dbReference>
<dbReference type="SMR" id="Q92HH5"/>
<dbReference type="GeneID" id="927480"/>
<dbReference type="KEGG" id="rco:RC0796"/>
<dbReference type="PATRIC" id="fig|272944.4.peg.905"/>
<dbReference type="HOGENOM" id="CLU_007100_1_3_5"/>
<dbReference type="Proteomes" id="UP000000816">
    <property type="component" value="Chromosome"/>
</dbReference>
<dbReference type="GO" id="GO:0005886">
    <property type="term" value="C:plasma membrane"/>
    <property type="evidence" value="ECO:0007669"/>
    <property type="project" value="UniProtKB-SubCell"/>
</dbReference>
<dbReference type="GO" id="GO:0008137">
    <property type="term" value="F:NADH dehydrogenase (ubiquinone) activity"/>
    <property type="evidence" value="ECO:0007669"/>
    <property type="project" value="InterPro"/>
</dbReference>
<dbReference type="GO" id="GO:0050136">
    <property type="term" value="F:NADH:ubiquinone reductase (non-electrogenic) activity"/>
    <property type="evidence" value="ECO:0007669"/>
    <property type="project" value="UniProtKB-UniRule"/>
</dbReference>
<dbReference type="GO" id="GO:0048038">
    <property type="term" value="F:quinone binding"/>
    <property type="evidence" value="ECO:0007669"/>
    <property type="project" value="UniProtKB-KW"/>
</dbReference>
<dbReference type="GO" id="GO:0042773">
    <property type="term" value="P:ATP synthesis coupled electron transport"/>
    <property type="evidence" value="ECO:0007669"/>
    <property type="project" value="InterPro"/>
</dbReference>
<dbReference type="HAMAP" id="MF_00445">
    <property type="entry name" value="NDH1_NuoN_1"/>
    <property type="match status" value="1"/>
</dbReference>
<dbReference type="InterPro" id="IPR010096">
    <property type="entry name" value="NADH-Q_OxRdtase_suN/2"/>
</dbReference>
<dbReference type="InterPro" id="IPR001750">
    <property type="entry name" value="ND/Mrp_TM"/>
</dbReference>
<dbReference type="NCBIfam" id="TIGR01770">
    <property type="entry name" value="NDH_I_N"/>
    <property type="match status" value="1"/>
</dbReference>
<dbReference type="NCBIfam" id="NF004447">
    <property type="entry name" value="PRK05777.2-5"/>
    <property type="match status" value="1"/>
</dbReference>
<dbReference type="PANTHER" id="PTHR22773">
    <property type="entry name" value="NADH DEHYDROGENASE"/>
    <property type="match status" value="1"/>
</dbReference>
<dbReference type="Pfam" id="PF00361">
    <property type="entry name" value="Proton_antipo_M"/>
    <property type="match status" value="1"/>
</dbReference>
<comment type="function">
    <text evidence="1">NDH-1 shuttles electrons from NADH, via FMN and iron-sulfur (Fe-S) centers, to quinones in the respiratory chain. The immediate electron acceptor for the enzyme in this species is believed to be ubiquinone. Couples the redox reaction to proton translocation (for every two electrons transferred, four hydrogen ions are translocated across the cytoplasmic membrane), and thus conserves the redox energy in a proton gradient.</text>
</comment>
<comment type="catalytic activity">
    <reaction evidence="1">
        <text>a quinone + NADH + 5 H(+)(in) = a quinol + NAD(+) + 4 H(+)(out)</text>
        <dbReference type="Rhea" id="RHEA:57888"/>
        <dbReference type="ChEBI" id="CHEBI:15378"/>
        <dbReference type="ChEBI" id="CHEBI:24646"/>
        <dbReference type="ChEBI" id="CHEBI:57540"/>
        <dbReference type="ChEBI" id="CHEBI:57945"/>
        <dbReference type="ChEBI" id="CHEBI:132124"/>
    </reaction>
</comment>
<comment type="subunit">
    <text evidence="1">NDH-1 is composed of 14 different subunits. Subunits NuoA, H, J, K, L, M, N constitute the membrane sector of the complex.</text>
</comment>
<comment type="subcellular location">
    <subcellularLocation>
        <location evidence="1">Cell inner membrane</location>
        <topology evidence="1">Multi-pass membrane protein</topology>
    </subcellularLocation>
</comment>
<comment type="similarity">
    <text evidence="1">Belongs to the complex I subunit 2 family.</text>
</comment>
<keyword id="KW-0997">Cell inner membrane</keyword>
<keyword id="KW-1003">Cell membrane</keyword>
<keyword id="KW-0472">Membrane</keyword>
<keyword id="KW-0520">NAD</keyword>
<keyword id="KW-0874">Quinone</keyword>
<keyword id="KW-1278">Translocase</keyword>
<keyword id="KW-0812">Transmembrane</keyword>
<keyword id="KW-1133">Transmembrane helix</keyword>
<keyword id="KW-0813">Transport</keyword>
<keyword id="KW-0830">Ubiquinone</keyword>
<proteinExistence type="inferred from homology"/>
<name>NUON_RICCN</name>
<sequence>MLLLLPEITLTLIALLGQFFAVMIPNKNRIISNIIILLCILSIFLTFKYSSYEGVWYSFATGINIGISKSIVLLFTIISMIIYRDYSILVADELKFEFITLMLLSVVGIFVAISSRNFLLLFCGMELTALTSYALAGFKLNDMKSSEGALKYFILGSLVSCLSLFGISFIYGFGGSLQFEDILYKLNDNSGMNLGLIIGIILFLSSIFFKLSSVPLHFWVPDVYEGSPITSVTYFNAASKIGMVIVLLNISKLIIGNYYPINYNLIKIIAILSMLFGAFGAIRQTSLKRLMAYSTILNIGYVLIGVLLHNQEGYKAALLYMLIYAVGSIGFFTCLIILLGKDVDKASFKTIQGIAEYHKTIAAVISIVMFSMIGIPPLTGFFGKYYLFYQAINQEEFALAYCGIFTSVVAAFYYLKVVKAMYFSKKIEIIKLPMQYGLLLINYLVVGFLLLGSFIISF</sequence>
<protein>
    <recommendedName>
        <fullName evidence="1">NADH-quinone oxidoreductase subunit N</fullName>
        <ecNumber evidence="1">7.1.1.-</ecNumber>
    </recommendedName>
    <alternativeName>
        <fullName evidence="1">NADH dehydrogenase I subunit N</fullName>
    </alternativeName>
    <alternativeName>
        <fullName evidence="1">NDH-1 subunit N</fullName>
    </alternativeName>
</protein>